<evidence type="ECO:0000250" key="1"/>
<evidence type="ECO:0000255" key="2"/>
<evidence type="ECO:0000305" key="3"/>
<dbReference type="EC" id="3.1.1.-"/>
<dbReference type="EMBL" id="AAFI02000085">
    <property type="protein sequence ID" value="EAL64426.1"/>
    <property type="molecule type" value="Genomic_DNA"/>
</dbReference>
<dbReference type="RefSeq" id="XP_637940.1">
    <property type="nucleotide sequence ID" value="XM_632848.1"/>
</dbReference>
<dbReference type="SMR" id="Q54M94"/>
<dbReference type="FunCoup" id="Q54M94">
    <property type="interactions" value="2"/>
</dbReference>
<dbReference type="STRING" id="44689.Q54M94"/>
<dbReference type="GlyCosmos" id="Q54M94">
    <property type="glycosylation" value="10 sites, No reported glycans"/>
</dbReference>
<dbReference type="GlyGen" id="Q54M94">
    <property type="glycosylation" value="10 sites"/>
</dbReference>
<dbReference type="PaxDb" id="44689-DDB0231378"/>
<dbReference type="EnsemblProtists" id="EAL64426">
    <property type="protein sequence ID" value="EAL64426"/>
    <property type="gene ID" value="DDB_G0286095"/>
</dbReference>
<dbReference type="GeneID" id="8625451"/>
<dbReference type="KEGG" id="ddi:DDB_G0286095"/>
<dbReference type="dictyBase" id="DDB_G0286095">
    <property type="gene designation" value="plbC"/>
</dbReference>
<dbReference type="VEuPathDB" id="AmoebaDB:DDB_G0286095"/>
<dbReference type="eggNOG" id="KOG3774">
    <property type="taxonomic scope" value="Eukaryota"/>
</dbReference>
<dbReference type="HOGENOM" id="CLU_027106_4_0_1"/>
<dbReference type="InParanoid" id="Q54M94"/>
<dbReference type="OMA" id="DIQNTGW"/>
<dbReference type="PhylomeDB" id="Q54M94"/>
<dbReference type="PRO" id="PR:Q54M94"/>
<dbReference type="Proteomes" id="UP000002195">
    <property type="component" value="Chromosome 4"/>
</dbReference>
<dbReference type="GO" id="GO:0005576">
    <property type="term" value="C:extracellular region"/>
    <property type="evidence" value="ECO:0000318"/>
    <property type="project" value="GO_Central"/>
</dbReference>
<dbReference type="GO" id="GO:0004620">
    <property type="term" value="F:phospholipase activity"/>
    <property type="evidence" value="ECO:0000250"/>
    <property type="project" value="dictyBase"/>
</dbReference>
<dbReference type="GO" id="GO:0046338">
    <property type="term" value="P:phosphatidylethanolamine catabolic process"/>
    <property type="evidence" value="ECO:0000250"/>
    <property type="project" value="dictyBase"/>
</dbReference>
<dbReference type="GO" id="GO:0031161">
    <property type="term" value="P:phosphatidylinositol catabolic process"/>
    <property type="evidence" value="ECO:0000250"/>
    <property type="project" value="dictyBase"/>
</dbReference>
<dbReference type="GO" id="GO:0009395">
    <property type="term" value="P:phospholipid catabolic process"/>
    <property type="evidence" value="ECO:0000250"/>
    <property type="project" value="dictyBase"/>
</dbReference>
<dbReference type="FunFam" id="3.60.60.30:FF:000001">
    <property type="entry name" value="Phospholipase B-like protein G"/>
    <property type="match status" value="1"/>
</dbReference>
<dbReference type="Gene3D" id="3.60.60.30">
    <property type="match status" value="1"/>
</dbReference>
<dbReference type="InterPro" id="IPR007000">
    <property type="entry name" value="PLipase_B-like"/>
</dbReference>
<dbReference type="PANTHER" id="PTHR12370:SF4">
    <property type="entry name" value="PHOSPHOLIPASE B-LIKE PROTEIN B-RELATED"/>
    <property type="match status" value="1"/>
</dbReference>
<dbReference type="PANTHER" id="PTHR12370">
    <property type="entry name" value="PHOSPHOLIPASE B-RELATED"/>
    <property type="match status" value="1"/>
</dbReference>
<dbReference type="Pfam" id="PF04916">
    <property type="entry name" value="Phospholip_B"/>
    <property type="match status" value="1"/>
</dbReference>
<sequence length="565" mass="64819">MNKIIILISLFLNFLFGYVVCLNENNQKSQNLIIPTYSIKLKSDGEYLVYSGNDTLSIAQASYTNEMMSIGWGYISITTNPKYNDSLQIEAAGYLEGYLSYEMIWQNWNNMMVNQNANNSFGNDIISWAKENILYMNQQIQLNQNDPYWINVNLVLQQLNGLTNGYSDANQNPDRQLSLMDFILLNMNVEIYDIMNSLKNNSSSFYQQPNNNSFDNNQHCSALIKLTDDLTELYTGHTTWSDYYQMVRMIKSYNFRFSKLVAAKSNTTMFSGYPGVLMSVDDFYMLDSKLVVLETTNGIKDNDSELFKLIKPQSVLTWIRIIVTNRIAHSGKSWCEIFEKENSGTYNNQWMIVDYNKFIKGVRVQDGTLYVFEQLPGYVEYADVTNILRTGYWPSFNVPYFETISNMSGFNYQSSSSDSSSSSGSIAYEQYPRSQIFRRDSNKVYSISDFQAFMRYNDFQNDPLAYGDPGNQISSRFDLITPQNNASAAGGIDSKVTSLELINQFLMIAQSGPTHDQEPPFSWSSENWKNKYPTIGQPDTFDFEWVTFSTTSFGSFPSASNEKNY</sequence>
<gene>
    <name type="primary">plbC</name>
    <name type="ORF">DDB_G0286095</name>
</gene>
<reference key="1">
    <citation type="journal article" date="2005" name="Nature">
        <title>The genome of the social amoeba Dictyostelium discoideum.</title>
        <authorList>
            <person name="Eichinger L."/>
            <person name="Pachebat J.A."/>
            <person name="Gloeckner G."/>
            <person name="Rajandream M.A."/>
            <person name="Sucgang R."/>
            <person name="Berriman M."/>
            <person name="Song J."/>
            <person name="Olsen R."/>
            <person name="Szafranski K."/>
            <person name="Xu Q."/>
            <person name="Tunggal B."/>
            <person name="Kummerfeld S."/>
            <person name="Madera M."/>
            <person name="Konfortov B.A."/>
            <person name="Rivero F."/>
            <person name="Bankier A.T."/>
            <person name="Lehmann R."/>
            <person name="Hamlin N."/>
            <person name="Davies R."/>
            <person name="Gaudet P."/>
            <person name="Fey P."/>
            <person name="Pilcher K."/>
            <person name="Chen G."/>
            <person name="Saunders D."/>
            <person name="Sodergren E.J."/>
            <person name="Davis P."/>
            <person name="Kerhornou A."/>
            <person name="Nie X."/>
            <person name="Hall N."/>
            <person name="Anjard C."/>
            <person name="Hemphill L."/>
            <person name="Bason N."/>
            <person name="Farbrother P."/>
            <person name="Desany B."/>
            <person name="Just E."/>
            <person name="Morio T."/>
            <person name="Rost R."/>
            <person name="Churcher C.M."/>
            <person name="Cooper J."/>
            <person name="Haydock S."/>
            <person name="van Driessche N."/>
            <person name="Cronin A."/>
            <person name="Goodhead I."/>
            <person name="Muzny D.M."/>
            <person name="Mourier T."/>
            <person name="Pain A."/>
            <person name="Lu M."/>
            <person name="Harper D."/>
            <person name="Lindsay R."/>
            <person name="Hauser H."/>
            <person name="James K.D."/>
            <person name="Quiles M."/>
            <person name="Madan Babu M."/>
            <person name="Saito T."/>
            <person name="Buchrieser C."/>
            <person name="Wardroper A."/>
            <person name="Felder M."/>
            <person name="Thangavelu M."/>
            <person name="Johnson D."/>
            <person name="Knights A."/>
            <person name="Loulseged H."/>
            <person name="Mungall K.L."/>
            <person name="Oliver K."/>
            <person name="Price C."/>
            <person name="Quail M.A."/>
            <person name="Urushihara H."/>
            <person name="Hernandez J."/>
            <person name="Rabbinowitsch E."/>
            <person name="Steffen D."/>
            <person name="Sanders M."/>
            <person name="Ma J."/>
            <person name="Kohara Y."/>
            <person name="Sharp S."/>
            <person name="Simmonds M.N."/>
            <person name="Spiegler S."/>
            <person name="Tivey A."/>
            <person name="Sugano S."/>
            <person name="White B."/>
            <person name="Walker D."/>
            <person name="Woodward J.R."/>
            <person name="Winckler T."/>
            <person name="Tanaka Y."/>
            <person name="Shaulsky G."/>
            <person name="Schleicher M."/>
            <person name="Weinstock G.M."/>
            <person name="Rosenthal A."/>
            <person name="Cox E.C."/>
            <person name="Chisholm R.L."/>
            <person name="Gibbs R.A."/>
            <person name="Loomis W.F."/>
            <person name="Platzer M."/>
            <person name="Kay R.R."/>
            <person name="Williams J.G."/>
            <person name="Dear P.H."/>
            <person name="Noegel A.A."/>
            <person name="Barrell B.G."/>
            <person name="Kuspa A."/>
        </authorList>
    </citation>
    <scope>NUCLEOTIDE SEQUENCE [LARGE SCALE GENOMIC DNA]</scope>
    <source>
        <strain>AX4</strain>
    </source>
</reference>
<feature type="signal peptide" evidence="2">
    <location>
        <begin position="1"/>
        <end position="21"/>
    </location>
</feature>
<feature type="chain" id="PRO_0000286119" description="Phospholipase B-like protein C">
    <location>
        <begin position="22"/>
        <end position="565"/>
    </location>
</feature>
<feature type="glycosylation site" description="N-linked (GlcNAc...) asparagine" evidence="2">
    <location>
        <position position="53"/>
    </location>
</feature>
<feature type="glycosylation site" description="N-linked (GlcNAc...) asparagine" evidence="2">
    <location>
        <position position="84"/>
    </location>
</feature>
<feature type="glycosylation site" description="N-linked (GlcNAc...) asparagine" evidence="2">
    <location>
        <position position="118"/>
    </location>
</feature>
<feature type="glycosylation site" description="N-linked (GlcNAc...) asparagine" evidence="2">
    <location>
        <position position="200"/>
    </location>
</feature>
<feature type="glycosylation site" description="N-linked (GlcNAc...) asparagine" evidence="2">
    <location>
        <position position="201"/>
    </location>
</feature>
<feature type="glycosylation site" description="N-linked (GlcNAc...) asparagine" evidence="2">
    <location>
        <position position="211"/>
    </location>
</feature>
<feature type="glycosylation site" description="N-linked (GlcNAc...) asparagine" evidence="2">
    <location>
        <position position="266"/>
    </location>
</feature>
<feature type="glycosylation site" description="N-linked (GlcNAc...) asparagine" evidence="2">
    <location>
        <position position="302"/>
    </location>
</feature>
<feature type="glycosylation site" description="N-linked (GlcNAc...) asparagine" evidence="2">
    <location>
        <position position="406"/>
    </location>
</feature>
<feature type="glycosylation site" description="N-linked (GlcNAc...) asparagine" evidence="2">
    <location>
        <position position="485"/>
    </location>
</feature>
<comment type="function">
    <text evidence="1">Probable phospholipase.</text>
</comment>
<comment type="subcellular location">
    <subcellularLocation>
        <location evidence="3">Secreted</location>
    </subcellularLocation>
</comment>
<comment type="similarity">
    <text evidence="3">Belongs to the phospholipase B-like family.</text>
</comment>
<keyword id="KW-0325">Glycoprotein</keyword>
<keyword id="KW-0378">Hydrolase</keyword>
<keyword id="KW-0442">Lipid degradation</keyword>
<keyword id="KW-0443">Lipid metabolism</keyword>
<keyword id="KW-1185">Reference proteome</keyword>
<keyword id="KW-0964">Secreted</keyword>
<keyword id="KW-0732">Signal</keyword>
<name>PLBLC_DICDI</name>
<organism>
    <name type="scientific">Dictyostelium discoideum</name>
    <name type="common">Social amoeba</name>
    <dbReference type="NCBI Taxonomy" id="44689"/>
    <lineage>
        <taxon>Eukaryota</taxon>
        <taxon>Amoebozoa</taxon>
        <taxon>Evosea</taxon>
        <taxon>Eumycetozoa</taxon>
        <taxon>Dictyostelia</taxon>
        <taxon>Dictyosteliales</taxon>
        <taxon>Dictyosteliaceae</taxon>
        <taxon>Dictyostelium</taxon>
    </lineage>
</organism>
<protein>
    <recommendedName>
        <fullName>Phospholipase B-like protein C</fullName>
        <ecNumber>3.1.1.-</ecNumber>
    </recommendedName>
</protein>
<proteinExistence type="inferred from homology"/>
<accession>Q54M94</accession>